<reference key="1">
    <citation type="journal article" date="2002" name="Proc. Natl. Acad. Sci. U.S.A.">
        <title>The genome sequence of Bifidobacterium longum reflects its adaptation to the human gastrointestinal tract.</title>
        <authorList>
            <person name="Schell M.A."/>
            <person name="Karmirantzou M."/>
            <person name="Snel B."/>
            <person name="Vilanova D."/>
            <person name="Berger B."/>
            <person name="Pessi G."/>
            <person name="Zwahlen M.-C."/>
            <person name="Desiere F."/>
            <person name="Bork P."/>
            <person name="Delley M."/>
            <person name="Pridmore R.D."/>
            <person name="Arigoni F."/>
        </authorList>
    </citation>
    <scope>NUCLEOTIDE SEQUENCE [LARGE SCALE GENOMIC DNA]</scope>
    <source>
        <strain>NCC 2705</strain>
    </source>
</reference>
<keyword id="KW-0963">Cytoplasm</keyword>
<keyword id="KW-0378">Hydrolase</keyword>
<keyword id="KW-0645">Protease</keyword>
<keyword id="KW-1185">Reference proteome</keyword>
<keyword id="KW-0720">Serine protease</keyword>
<protein>
    <recommendedName>
        <fullName evidence="1">ATP-dependent Clp protease proteolytic subunit 2</fullName>
        <ecNumber evidence="1">3.4.21.92</ecNumber>
    </recommendedName>
    <alternativeName>
        <fullName evidence="1">Endopeptidase Clp 2</fullName>
    </alternativeName>
</protein>
<accession>Q8G5Q9</accession>
<proteinExistence type="inferred from homology"/>
<name>CLPP2_BIFLO</name>
<evidence type="ECO:0000255" key="1">
    <source>
        <dbReference type="HAMAP-Rule" id="MF_00444"/>
    </source>
</evidence>
<gene>
    <name evidence="1" type="primary">clpP2</name>
    <name type="ordered locus">BL0945</name>
</gene>
<sequence>MSNTFATLPVMAGDDVPAGPVDPIFNRLLKDRIIWMGEEVKDDMANRICAQLLMLAAEDPKKDIWLYINSPGGSITAGMAIYDTMQLIEPDVATVGLGMCASMGQFLLSSGTKGKRYLTSHARVLMHQPSGGIGGTATDVRINAELIMDMKKTMSELTAEQTGHTLEEIYRDNEYDHWFTAQEALDYGFVDKLVTTPDTIGNNQQGE</sequence>
<dbReference type="EC" id="3.4.21.92" evidence="1"/>
<dbReference type="EMBL" id="AE014295">
    <property type="protein sequence ID" value="AAN24757.1"/>
    <property type="molecule type" value="Genomic_DNA"/>
</dbReference>
<dbReference type="RefSeq" id="NP_696121.1">
    <property type="nucleotide sequence ID" value="NC_004307.2"/>
</dbReference>
<dbReference type="RefSeq" id="WP_007052058.1">
    <property type="nucleotide sequence ID" value="NC_004307.2"/>
</dbReference>
<dbReference type="SMR" id="Q8G5Q9"/>
<dbReference type="STRING" id="206672.BL0945"/>
<dbReference type="MEROPS" id="S14.008"/>
<dbReference type="EnsemblBacteria" id="AAN24757">
    <property type="protein sequence ID" value="AAN24757"/>
    <property type="gene ID" value="BL0945"/>
</dbReference>
<dbReference type="KEGG" id="blo:BL0945"/>
<dbReference type="PATRIC" id="fig|206672.9.peg.647"/>
<dbReference type="HOGENOM" id="CLU_058707_3_2_11"/>
<dbReference type="OrthoDB" id="9802800at2"/>
<dbReference type="PhylomeDB" id="Q8G5Q9"/>
<dbReference type="Proteomes" id="UP000000439">
    <property type="component" value="Chromosome"/>
</dbReference>
<dbReference type="GO" id="GO:0005737">
    <property type="term" value="C:cytoplasm"/>
    <property type="evidence" value="ECO:0007669"/>
    <property type="project" value="UniProtKB-SubCell"/>
</dbReference>
<dbReference type="GO" id="GO:0009368">
    <property type="term" value="C:endopeptidase Clp complex"/>
    <property type="evidence" value="ECO:0007669"/>
    <property type="project" value="TreeGrafter"/>
</dbReference>
<dbReference type="GO" id="GO:0004176">
    <property type="term" value="F:ATP-dependent peptidase activity"/>
    <property type="evidence" value="ECO:0007669"/>
    <property type="project" value="InterPro"/>
</dbReference>
<dbReference type="GO" id="GO:0051117">
    <property type="term" value="F:ATPase binding"/>
    <property type="evidence" value="ECO:0007669"/>
    <property type="project" value="TreeGrafter"/>
</dbReference>
<dbReference type="GO" id="GO:0004252">
    <property type="term" value="F:serine-type endopeptidase activity"/>
    <property type="evidence" value="ECO:0007669"/>
    <property type="project" value="UniProtKB-UniRule"/>
</dbReference>
<dbReference type="GO" id="GO:0006515">
    <property type="term" value="P:protein quality control for misfolded or incompletely synthesized proteins"/>
    <property type="evidence" value="ECO:0007669"/>
    <property type="project" value="TreeGrafter"/>
</dbReference>
<dbReference type="CDD" id="cd07017">
    <property type="entry name" value="S14_ClpP_2"/>
    <property type="match status" value="1"/>
</dbReference>
<dbReference type="FunFam" id="3.90.226.10:FF:000002">
    <property type="entry name" value="ATP-dependent Clp protease proteolytic subunit"/>
    <property type="match status" value="1"/>
</dbReference>
<dbReference type="Gene3D" id="3.90.226.10">
    <property type="entry name" value="2-enoyl-CoA Hydratase, Chain A, domain 1"/>
    <property type="match status" value="1"/>
</dbReference>
<dbReference type="HAMAP" id="MF_00444">
    <property type="entry name" value="ClpP"/>
    <property type="match status" value="1"/>
</dbReference>
<dbReference type="InterPro" id="IPR001907">
    <property type="entry name" value="ClpP"/>
</dbReference>
<dbReference type="InterPro" id="IPR029045">
    <property type="entry name" value="ClpP/crotonase-like_dom_sf"/>
</dbReference>
<dbReference type="InterPro" id="IPR023562">
    <property type="entry name" value="ClpP/TepA"/>
</dbReference>
<dbReference type="NCBIfam" id="NF001368">
    <property type="entry name" value="PRK00277.1"/>
    <property type="match status" value="1"/>
</dbReference>
<dbReference type="NCBIfam" id="NF009205">
    <property type="entry name" value="PRK12553.1"/>
    <property type="match status" value="1"/>
</dbReference>
<dbReference type="PANTHER" id="PTHR10381">
    <property type="entry name" value="ATP-DEPENDENT CLP PROTEASE PROTEOLYTIC SUBUNIT"/>
    <property type="match status" value="1"/>
</dbReference>
<dbReference type="PANTHER" id="PTHR10381:SF70">
    <property type="entry name" value="ATP-DEPENDENT CLP PROTEASE PROTEOLYTIC SUBUNIT"/>
    <property type="match status" value="1"/>
</dbReference>
<dbReference type="Pfam" id="PF00574">
    <property type="entry name" value="CLP_protease"/>
    <property type="match status" value="1"/>
</dbReference>
<dbReference type="PRINTS" id="PR00127">
    <property type="entry name" value="CLPPROTEASEP"/>
</dbReference>
<dbReference type="SUPFAM" id="SSF52096">
    <property type="entry name" value="ClpP/crotonase"/>
    <property type="match status" value="1"/>
</dbReference>
<feature type="chain" id="PRO_0000179507" description="ATP-dependent Clp protease proteolytic subunit 2">
    <location>
        <begin position="1"/>
        <end position="207"/>
    </location>
</feature>
<feature type="active site" description="Nucleophile" evidence="1">
    <location>
        <position position="102"/>
    </location>
</feature>
<feature type="active site" evidence="1">
    <location>
        <position position="127"/>
    </location>
</feature>
<organism>
    <name type="scientific">Bifidobacterium longum (strain NCC 2705)</name>
    <dbReference type="NCBI Taxonomy" id="206672"/>
    <lineage>
        <taxon>Bacteria</taxon>
        <taxon>Bacillati</taxon>
        <taxon>Actinomycetota</taxon>
        <taxon>Actinomycetes</taxon>
        <taxon>Bifidobacteriales</taxon>
        <taxon>Bifidobacteriaceae</taxon>
        <taxon>Bifidobacterium</taxon>
    </lineage>
</organism>
<comment type="function">
    <text evidence="1">Cleaves peptides in various proteins in a process that requires ATP hydrolysis. Has a chymotrypsin-like activity. Plays a major role in the degradation of misfolded proteins.</text>
</comment>
<comment type="catalytic activity">
    <reaction evidence="1">
        <text>Hydrolysis of proteins to small peptides in the presence of ATP and magnesium. alpha-casein is the usual test substrate. In the absence of ATP, only oligopeptides shorter than five residues are hydrolyzed (such as succinyl-Leu-Tyr-|-NHMec, and Leu-Tyr-Leu-|-Tyr-Trp, in which cleavage of the -Tyr-|-Leu- and -Tyr-|-Trp bonds also occurs).</text>
        <dbReference type="EC" id="3.4.21.92"/>
    </reaction>
</comment>
<comment type="subunit">
    <text evidence="1">Fourteen ClpP subunits assemble into 2 heptameric rings which stack back to back to give a disk-like structure with a central cavity, resembling the structure of eukaryotic proteasomes.</text>
</comment>
<comment type="subcellular location">
    <subcellularLocation>
        <location evidence="1">Cytoplasm</location>
    </subcellularLocation>
</comment>
<comment type="similarity">
    <text evidence="1">Belongs to the peptidase S14 family.</text>
</comment>